<proteinExistence type="inferred from homology"/>
<organism>
    <name type="scientific">Bacillus cereus (strain AH820)</name>
    <dbReference type="NCBI Taxonomy" id="405535"/>
    <lineage>
        <taxon>Bacteria</taxon>
        <taxon>Bacillati</taxon>
        <taxon>Bacillota</taxon>
        <taxon>Bacilli</taxon>
        <taxon>Bacillales</taxon>
        <taxon>Bacillaceae</taxon>
        <taxon>Bacillus</taxon>
        <taxon>Bacillus cereus group</taxon>
    </lineage>
</organism>
<keyword id="KW-0028">Amino-acid biosynthesis</keyword>
<keyword id="KW-0368">Histidine biosynthesis</keyword>
<keyword id="KW-0378">Hydrolase</keyword>
<keyword id="KW-0486">Methionine biosynthesis</keyword>
<keyword id="KW-0511">Multifunctional enzyme</keyword>
<keyword id="KW-0521">NADP</keyword>
<keyword id="KW-0554">One-carbon metabolism</keyword>
<keyword id="KW-0560">Oxidoreductase</keyword>
<keyword id="KW-0658">Purine biosynthesis</keyword>
<comment type="function">
    <text evidence="1">Catalyzes the oxidation of 5,10-methylenetetrahydrofolate to 5,10-methenyltetrahydrofolate and then the hydrolysis of 5,10-methenyltetrahydrofolate to 10-formyltetrahydrofolate.</text>
</comment>
<comment type="catalytic activity">
    <reaction evidence="1">
        <text>(6R)-5,10-methylene-5,6,7,8-tetrahydrofolate + NADP(+) = (6R)-5,10-methenyltetrahydrofolate + NADPH</text>
        <dbReference type="Rhea" id="RHEA:22812"/>
        <dbReference type="ChEBI" id="CHEBI:15636"/>
        <dbReference type="ChEBI" id="CHEBI:57455"/>
        <dbReference type="ChEBI" id="CHEBI:57783"/>
        <dbReference type="ChEBI" id="CHEBI:58349"/>
        <dbReference type="EC" id="1.5.1.5"/>
    </reaction>
</comment>
<comment type="catalytic activity">
    <reaction evidence="1">
        <text>(6R)-5,10-methenyltetrahydrofolate + H2O = (6R)-10-formyltetrahydrofolate + H(+)</text>
        <dbReference type="Rhea" id="RHEA:23700"/>
        <dbReference type="ChEBI" id="CHEBI:15377"/>
        <dbReference type="ChEBI" id="CHEBI:15378"/>
        <dbReference type="ChEBI" id="CHEBI:57455"/>
        <dbReference type="ChEBI" id="CHEBI:195366"/>
        <dbReference type="EC" id="3.5.4.9"/>
    </reaction>
</comment>
<comment type="pathway">
    <text evidence="1">One-carbon metabolism; tetrahydrofolate interconversion.</text>
</comment>
<comment type="subunit">
    <text evidence="1">Homodimer.</text>
</comment>
<comment type="similarity">
    <text evidence="1">Belongs to the tetrahydrofolate dehydrogenase/cyclohydrolase family.</text>
</comment>
<feature type="chain" id="PRO_1000147438" description="Bifunctional protein FolD">
    <location>
        <begin position="1"/>
        <end position="286"/>
    </location>
</feature>
<feature type="binding site" evidence="1">
    <location>
        <begin position="165"/>
        <end position="167"/>
    </location>
    <ligand>
        <name>NADP(+)</name>
        <dbReference type="ChEBI" id="CHEBI:58349"/>
    </ligand>
</feature>
<feature type="binding site" evidence="1">
    <location>
        <position position="190"/>
    </location>
    <ligand>
        <name>NADP(+)</name>
        <dbReference type="ChEBI" id="CHEBI:58349"/>
    </ligand>
</feature>
<feature type="binding site" evidence="1">
    <location>
        <position position="231"/>
    </location>
    <ligand>
        <name>NADP(+)</name>
        <dbReference type="ChEBI" id="CHEBI:58349"/>
    </ligand>
</feature>
<dbReference type="EC" id="1.5.1.5" evidence="1"/>
<dbReference type="EC" id="3.5.4.9" evidence="1"/>
<dbReference type="EMBL" id="CP001283">
    <property type="protein sequence ID" value="ACK91509.1"/>
    <property type="molecule type" value="Genomic_DNA"/>
</dbReference>
<dbReference type="RefSeq" id="WP_000226720.1">
    <property type="nucleotide sequence ID" value="NC_011773.1"/>
</dbReference>
<dbReference type="SMR" id="B7JM32"/>
<dbReference type="KEGG" id="bcu:BCAH820_4201"/>
<dbReference type="HOGENOM" id="CLU_034045_2_1_9"/>
<dbReference type="UniPathway" id="UPA00193"/>
<dbReference type="Proteomes" id="UP000001363">
    <property type="component" value="Chromosome"/>
</dbReference>
<dbReference type="GO" id="GO:0005829">
    <property type="term" value="C:cytosol"/>
    <property type="evidence" value="ECO:0007669"/>
    <property type="project" value="TreeGrafter"/>
</dbReference>
<dbReference type="GO" id="GO:0004477">
    <property type="term" value="F:methenyltetrahydrofolate cyclohydrolase activity"/>
    <property type="evidence" value="ECO:0007669"/>
    <property type="project" value="UniProtKB-UniRule"/>
</dbReference>
<dbReference type="GO" id="GO:0004488">
    <property type="term" value="F:methylenetetrahydrofolate dehydrogenase (NADP+) activity"/>
    <property type="evidence" value="ECO:0007669"/>
    <property type="project" value="UniProtKB-UniRule"/>
</dbReference>
<dbReference type="GO" id="GO:0000105">
    <property type="term" value="P:L-histidine biosynthetic process"/>
    <property type="evidence" value="ECO:0007669"/>
    <property type="project" value="UniProtKB-KW"/>
</dbReference>
<dbReference type="GO" id="GO:0009086">
    <property type="term" value="P:methionine biosynthetic process"/>
    <property type="evidence" value="ECO:0007669"/>
    <property type="project" value="UniProtKB-KW"/>
</dbReference>
<dbReference type="GO" id="GO:0006164">
    <property type="term" value="P:purine nucleotide biosynthetic process"/>
    <property type="evidence" value="ECO:0007669"/>
    <property type="project" value="UniProtKB-KW"/>
</dbReference>
<dbReference type="GO" id="GO:0035999">
    <property type="term" value="P:tetrahydrofolate interconversion"/>
    <property type="evidence" value="ECO:0007669"/>
    <property type="project" value="UniProtKB-UniRule"/>
</dbReference>
<dbReference type="CDD" id="cd01080">
    <property type="entry name" value="NAD_bind_m-THF_DH_Cyclohyd"/>
    <property type="match status" value="1"/>
</dbReference>
<dbReference type="FunFam" id="3.40.50.10860:FF:000001">
    <property type="entry name" value="Bifunctional protein FolD"/>
    <property type="match status" value="1"/>
</dbReference>
<dbReference type="FunFam" id="3.40.50.720:FF:000006">
    <property type="entry name" value="Bifunctional protein FolD"/>
    <property type="match status" value="1"/>
</dbReference>
<dbReference type="Gene3D" id="3.40.50.10860">
    <property type="entry name" value="Leucine Dehydrogenase, chain A, domain 1"/>
    <property type="match status" value="1"/>
</dbReference>
<dbReference type="Gene3D" id="3.40.50.720">
    <property type="entry name" value="NAD(P)-binding Rossmann-like Domain"/>
    <property type="match status" value="1"/>
</dbReference>
<dbReference type="HAMAP" id="MF_01576">
    <property type="entry name" value="THF_DHG_CYH"/>
    <property type="match status" value="1"/>
</dbReference>
<dbReference type="InterPro" id="IPR046346">
    <property type="entry name" value="Aminoacid_DH-like_N_sf"/>
</dbReference>
<dbReference type="InterPro" id="IPR036291">
    <property type="entry name" value="NAD(P)-bd_dom_sf"/>
</dbReference>
<dbReference type="InterPro" id="IPR000672">
    <property type="entry name" value="THF_DH/CycHdrlase"/>
</dbReference>
<dbReference type="InterPro" id="IPR020630">
    <property type="entry name" value="THF_DH/CycHdrlase_cat_dom"/>
</dbReference>
<dbReference type="InterPro" id="IPR020867">
    <property type="entry name" value="THF_DH/CycHdrlase_CS"/>
</dbReference>
<dbReference type="InterPro" id="IPR020631">
    <property type="entry name" value="THF_DH/CycHdrlase_NAD-bd_dom"/>
</dbReference>
<dbReference type="NCBIfam" id="NF008058">
    <property type="entry name" value="PRK10792.1"/>
    <property type="match status" value="1"/>
</dbReference>
<dbReference type="NCBIfam" id="NF010783">
    <property type="entry name" value="PRK14186.1"/>
    <property type="match status" value="1"/>
</dbReference>
<dbReference type="PANTHER" id="PTHR48099:SF5">
    <property type="entry name" value="C-1-TETRAHYDROFOLATE SYNTHASE, CYTOPLASMIC"/>
    <property type="match status" value="1"/>
</dbReference>
<dbReference type="PANTHER" id="PTHR48099">
    <property type="entry name" value="C-1-TETRAHYDROFOLATE SYNTHASE, CYTOPLASMIC-RELATED"/>
    <property type="match status" value="1"/>
</dbReference>
<dbReference type="Pfam" id="PF00763">
    <property type="entry name" value="THF_DHG_CYH"/>
    <property type="match status" value="1"/>
</dbReference>
<dbReference type="Pfam" id="PF02882">
    <property type="entry name" value="THF_DHG_CYH_C"/>
    <property type="match status" value="1"/>
</dbReference>
<dbReference type="PRINTS" id="PR00085">
    <property type="entry name" value="THFDHDRGNASE"/>
</dbReference>
<dbReference type="SUPFAM" id="SSF53223">
    <property type="entry name" value="Aminoacid dehydrogenase-like, N-terminal domain"/>
    <property type="match status" value="1"/>
</dbReference>
<dbReference type="SUPFAM" id="SSF51735">
    <property type="entry name" value="NAD(P)-binding Rossmann-fold domains"/>
    <property type="match status" value="1"/>
</dbReference>
<dbReference type="PROSITE" id="PS00767">
    <property type="entry name" value="THF_DHG_CYH_2"/>
    <property type="match status" value="1"/>
</dbReference>
<reference key="1">
    <citation type="submission" date="2008-10" db="EMBL/GenBank/DDBJ databases">
        <title>Genome sequence of Bacillus cereus AH820.</title>
        <authorList>
            <person name="Dodson R.J."/>
            <person name="Durkin A.S."/>
            <person name="Rosovitz M.J."/>
            <person name="Rasko D.A."/>
            <person name="Hoffmaster A."/>
            <person name="Ravel J."/>
            <person name="Sutton G."/>
        </authorList>
    </citation>
    <scope>NUCLEOTIDE SEQUENCE [LARGE SCALE GENOMIC DNA]</scope>
    <source>
        <strain>AH820</strain>
    </source>
</reference>
<sequence length="286" mass="31151">MVAVIIKGNEVAEKKRAQLKEEVVKLKEQGIVPGLAVILVGEDPASRSYVKGKEKGCEQVGIYSELIEFPETITEERLLAEIDRLNGDDRINGILVQLPLPKHIEEKAIIERISPEKDVDGFHPISVGRMMTGQDTFLPCTPHGIVELVKETNLDISGKHVVVIGRSNIVGKPVGQLFLNENATVTYCHSKTQNMKELTKLADILIVAVGRPKMVTADYIKEGAVVIDVGVNRLETGKLCGDVDFDNVLDVAGYITPVPKGVGPMTITMLLHNTVESAKRAGVVCK</sequence>
<gene>
    <name evidence="1" type="primary">folD</name>
    <name type="ordered locus">BCAH820_4201</name>
</gene>
<protein>
    <recommendedName>
        <fullName evidence="1">Bifunctional protein FolD</fullName>
    </recommendedName>
    <domain>
        <recommendedName>
            <fullName evidence="1">Methylenetetrahydrofolate dehydrogenase</fullName>
            <ecNumber evidence="1">1.5.1.5</ecNumber>
        </recommendedName>
    </domain>
    <domain>
        <recommendedName>
            <fullName evidence="1">Methenyltetrahydrofolate cyclohydrolase</fullName>
            <ecNumber evidence="1">3.5.4.9</ecNumber>
        </recommendedName>
    </domain>
</protein>
<evidence type="ECO:0000255" key="1">
    <source>
        <dbReference type="HAMAP-Rule" id="MF_01576"/>
    </source>
</evidence>
<accession>B7JM32</accession>
<name>FOLD_BACC0</name>